<accession>C4Z0F5</accession>
<evidence type="ECO:0000255" key="1">
    <source>
        <dbReference type="HAMAP-Rule" id="MF_01221"/>
    </source>
</evidence>
<organism>
    <name type="scientific">Lachnospira eligens (strain ATCC 27750 / DSM 3376 / VPI C15-48 / C15-B4)</name>
    <name type="common">Eubacterium eligens</name>
    <dbReference type="NCBI Taxonomy" id="515620"/>
    <lineage>
        <taxon>Bacteria</taxon>
        <taxon>Bacillati</taxon>
        <taxon>Bacillota</taxon>
        <taxon>Clostridia</taxon>
        <taxon>Lachnospirales</taxon>
        <taxon>Lachnospiraceae</taxon>
        <taxon>Lachnospira</taxon>
    </lineage>
</organism>
<feature type="chain" id="PRO_1000213962" description="UPF0210 protein EUBELI_01067">
    <location>
        <begin position="1"/>
        <end position="454"/>
    </location>
</feature>
<protein>
    <recommendedName>
        <fullName evidence="1">UPF0210 protein EUBELI_01067</fullName>
    </recommendedName>
</protein>
<reference key="1">
    <citation type="journal article" date="2009" name="Proc. Natl. Acad. Sci. U.S.A.">
        <title>Characterizing a model human gut microbiota composed of members of its two dominant bacterial phyla.</title>
        <authorList>
            <person name="Mahowald M.A."/>
            <person name="Rey F.E."/>
            <person name="Seedorf H."/>
            <person name="Turnbaugh P.J."/>
            <person name="Fulton R.S."/>
            <person name="Wollam A."/>
            <person name="Shah N."/>
            <person name="Wang C."/>
            <person name="Magrini V."/>
            <person name="Wilson R.K."/>
            <person name="Cantarel B.L."/>
            <person name="Coutinho P.M."/>
            <person name="Henrissat B."/>
            <person name="Crock L.W."/>
            <person name="Russell A."/>
            <person name="Verberkmoes N.C."/>
            <person name="Hettich R.L."/>
            <person name="Gordon J.I."/>
        </authorList>
    </citation>
    <scope>NUCLEOTIDE SEQUENCE [LARGE SCALE GENOMIC DNA]</scope>
    <source>
        <strain>ATCC 27750 / DSM 3376 / VPI C15-48 / C15-B4</strain>
    </source>
</reference>
<proteinExistence type="inferred from homology"/>
<sequence length="454" mass="47538">MINIMEVTETNKMVEKENLDVRTITMGINLLDCAGPDLAEVNEKIYNKITTLAKDLVSTGEEIAKEFGVPIVNKRISITPISLVGSSACKTPEDYVTIAKTLDKAAHTVGVNFIGGYSAVVSKGMTKSDELLIRSIPQALAQTELICSSVNVGSTKTGINMDAVRLMGEIVKETAELTKDKDSLGCAKLVVLCNAPDDNPFMAGAFHGVTEDDAIINVGVSGPGVVKYALESVRGKSFEVLCETIKKTAFKITRVGQLVAQEASKRLGVPFGIIDLSLAPTPAVGDSVAEILEEIGLERAGAPGTTAALAMLNDQVKKGGVMASSYVGGLSGAFIPVSEDQGMIDAVNEGSLTIEKLEAMTCVCSVGLDMIAIPGDTPATTISGIIADEAAIGMVNQKTTAVRVIPVVGKGVGETVEFGGLLGYAPIMPVNKFDCSAFVNRVGRIPAPIHSFKN</sequence>
<dbReference type="EMBL" id="CP001104">
    <property type="protein sequence ID" value="ACR72068.1"/>
    <property type="molecule type" value="Genomic_DNA"/>
</dbReference>
<dbReference type="RefSeq" id="WP_012739303.1">
    <property type="nucleotide sequence ID" value="NC_012778.1"/>
</dbReference>
<dbReference type="SMR" id="C4Z0F5"/>
<dbReference type="STRING" id="515620.EUBELI_01067"/>
<dbReference type="GeneID" id="41355794"/>
<dbReference type="KEGG" id="eel:EUBELI_01067"/>
<dbReference type="eggNOG" id="COG2848">
    <property type="taxonomic scope" value="Bacteria"/>
</dbReference>
<dbReference type="HOGENOM" id="CLU_048704_0_0_9"/>
<dbReference type="Proteomes" id="UP000001476">
    <property type="component" value="Chromosome"/>
</dbReference>
<dbReference type="CDD" id="cd08025">
    <property type="entry name" value="RNR_PFL_like_DUF711"/>
    <property type="match status" value="1"/>
</dbReference>
<dbReference type="Gene3D" id="3.20.70.20">
    <property type="match status" value="1"/>
</dbReference>
<dbReference type="HAMAP" id="MF_01221">
    <property type="entry name" value="UPF0210"/>
    <property type="match status" value="1"/>
</dbReference>
<dbReference type="InterPro" id="IPR007841">
    <property type="entry name" value="UPF0210"/>
</dbReference>
<dbReference type="NCBIfam" id="NF003700">
    <property type="entry name" value="PRK05313.1"/>
    <property type="match status" value="1"/>
</dbReference>
<dbReference type="PANTHER" id="PTHR37560:SF1">
    <property type="entry name" value="UPF0210 PROTEIN MJ1665"/>
    <property type="match status" value="1"/>
</dbReference>
<dbReference type="PANTHER" id="PTHR37560">
    <property type="entry name" value="UPF0210 PROTEIN SPR0218"/>
    <property type="match status" value="1"/>
</dbReference>
<dbReference type="Pfam" id="PF05167">
    <property type="entry name" value="DUF711"/>
    <property type="match status" value="1"/>
</dbReference>
<dbReference type="SUPFAM" id="SSF51998">
    <property type="entry name" value="PFL-like glycyl radical enzymes"/>
    <property type="match status" value="1"/>
</dbReference>
<name>Y1067_LACE2</name>
<gene>
    <name type="ordered locus">EUBELI_01067</name>
</gene>
<keyword id="KW-1185">Reference proteome</keyword>
<comment type="subunit">
    <text evidence="1">Homodimer.</text>
</comment>
<comment type="similarity">
    <text evidence="1">Belongs to the UPF0210 family.</text>
</comment>